<dbReference type="EC" id="1.14.-.-" evidence="1"/>
<dbReference type="EMBL" id="CP000009">
    <property type="protein sequence ID" value="AAW60667.1"/>
    <property type="molecule type" value="Genomic_DNA"/>
</dbReference>
<dbReference type="RefSeq" id="WP_011252463.1">
    <property type="nucleotide sequence ID" value="NC_006677.1"/>
</dbReference>
<dbReference type="SMR" id="Q5FSH9"/>
<dbReference type="STRING" id="290633.GOX0895"/>
<dbReference type="KEGG" id="gox:GOX0895"/>
<dbReference type="eggNOG" id="COG1054">
    <property type="taxonomic scope" value="Bacteria"/>
</dbReference>
<dbReference type="HOGENOM" id="CLU_038878_0_0_5"/>
<dbReference type="Proteomes" id="UP000006375">
    <property type="component" value="Chromosome"/>
</dbReference>
<dbReference type="GO" id="GO:0016705">
    <property type="term" value="F:oxidoreductase activity, acting on paired donors, with incorporation or reduction of molecular oxygen"/>
    <property type="evidence" value="ECO:0007669"/>
    <property type="project" value="UniProtKB-UniRule"/>
</dbReference>
<dbReference type="GO" id="GO:0006400">
    <property type="term" value="P:tRNA modification"/>
    <property type="evidence" value="ECO:0007669"/>
    <property type="project" value="UniProtKB-UniRule"/>
</dbReference>
<dbReference type="CDD" id="cd01518">
    <property type="entry name" value="RHOD_YceA"/>
    <property type="match status" value="1"/>
</dbReference>
<dbReference type="Gene3D" id="3.30.70.100">
    <property type="match status" value="1"/>
</dbReference>
<dbReference type="Gene3D" id="3.40.250.10">
    <property type="entry name" value="Rhodanese-like domain"/>
    <property type="match status" value="1"/>
</dbReference>
<dbReference type="HAMAP" id="MF_00469">
    <property type="entry name" value="TrhO"/>
    <property type="match status" value="1"/>
</dbReference>
<dbReference type="InterPro" id="IPR001763">
    <property type="entry name" value="Rhodanese-like_dom"/>
</dbReference>
<dbReference type="InterPro" id="IPR036873">
    <property type="entry name" value="Rhodanese-like_dom_sf"/>
</dbReference>
<dbReference type="InterPro" id="IPR020936">
    <property type="entry name" value="TrhO"/>
</dbReference>
<dbReference type="InterPro" id="IPR040503">
    <property type="entry name" value="TRHO_N"/>
</dbReference>
<dbReference type="NCBIfam" id="NF001136">
    <property type="entry name" value="PRK00142.1-4"/>
    <property type="match status" value="1"/>
</dbReference>
<dbReference type="PANTHER" id="PTHR43268:SF3">
    <property type="entry name" value="RHODANESE-LIKE DOMAIN-CONTAINING PROTEIN 7-RELATED"/>
    <property type="match status" value="1"/>
</dbReference>
<dbReference type="PANTHER" id="PTHR43268">
    <property type="entry name" value="THIOSULFATE SULFURTRANSFERASE/RHODANESE-LIKE DOMAIN-CONTAINING PROTEIN 2"/>
    <property type="match status" value="1"/>
</dbReference>
<dbReference type="Pfam" id="PF00581">
    <property type="entry name" value="Rhodanese"/>
    <property type="match status" value="1"/>
</dbReference>
<dbReference type="Pfam" id="PF17773">
    <property type="entry name" value="UPF0176_N"/>
    <property type="match status" value="1"/>
</dbReference>
<dbReference type="SMART" id="SM00450">
    <property type="entry name" value="RHOD"/>
    <property type="match status" value="1"/>
</dbReference>
<dbReference type="SUPFAM" id="SSF52821">
    <property type="entry name" value="Rhodanese/Cell cycle control phosphatase"/>
    <property type="match status" value="1"/>
</dbReference>
<dbReference type="PROSITE" id="PS50206">
    <property type="entry name" value="RHODANESE_3"/>
    <property type="match status" value="1"/>
</dbReference>
<organism>
    <name type="scientific">Gluconobacter oxydans (strain 621H)</name>
    <name type="common">Gluconobacter suboxydans</name>
    <dbReference type="NCBI Taxonomy" id="290633"/>
    <lineage>
        <taxon>Bacteria</taxon>
        <taxon>Pseudomonadati</taxon>
        <taxon>Pseudomonadota</taxon>
        <taxon>Alphaproteobacteria</taxon>
        <taxon>Acetobacterales</taxon>
        <taxon>Acetobacteraceae</taxon>
        <taxon>Gluconobacter</taxon>
    </lineage>
</organism>
<reference key="1">
    <citation type="journal article" date="2005" name="Nat. Biotechnol.">
        <title>Complete genome sequence of the acetic acid bacterium Gluconobacter oxydans.</title>
        <authorList>
            <person name="Prust C."/>
            <person name="Hoffmeister M."/>
            <person name="Liesegang H."/>
            <person name="Wiezer A."/>
            <person name="Fricke W.F."/>
            <person name="Ehrenreich A."/>
            <person name="Gottschalk G."/>
            <person name="Deppenmeier U."/>
        </authorList>
    </citation>
    <scope>NUCLEOTIDE SEQUENCE [LARGE SCALE GENOMIC DNA]</scope>
    <source>
        <strain>621H</strain>
    </source>
</reference>
<name>TRHO_GLUOX</name>
<evidence type="ECO:0000255" key="1">
    <source>
        <dbReference type="HAMAP-Rule" id="MF_00469"/>
    </source>
</evidence>
<gene>
    <name evidence="1" type="primary">trhO</name>
    <name type="ordered locus">GOX0895</name>
</gene>
<accession>Q5FSH9</accession>
<comment type="function">
    <text evidence="1">Catalyzes oxygen-dependent 5-hydroxyuridine (ho5U) modification at position 34 in tRNAs.</text>
</comment>
<comment type="catalytic activity">
    <reaction evidence="1">
        <text>uridine(34) in tRNA + AH2 + O2 = 5-hydroxyuridine(34) in tRNA + A + H2O</text>
        <dbReference type="Rhea" id="RHEA:64224"/>
        <dbReference type="Rhea" id="RHEA-COMP:11727"/>
        <dbReference type="Rhea" id="RHEA-COMP:13381"/>
        <dbReference type="ChEBI" id="CHEBI:13193"/>
        <dbReference type="ChEBI" id="CHEBI:15377"/>
        <dbReference type="ChEBI" id="CHEBI:15379"/>
        <dbReference type="ChEBI" id="CHEBI:17499"/>
        <dbReference type="ChEBI" id="CHEBI:65315"/>
        <dbReference type="ChEBI" id="CHEBI:136877"/>
    </reaction>
</comment>
<comment type="similarity">
    <text evidence="1">Belongs to the TrhO family.</text>
</comment>
<protein>
    <recommendedName>
        <fullName evidence="1">tRNA uridine(34) hydroxylase</fullName>
        <ecNumber evidence="1">1.14.-.-</ecNumber>
    </recommendedName>
    <alternativeName>
        <fullName evidence="1">tRNA hydroxylation protein O</fullName>
    </alternativeName>
</protein>
<feature type="chain" id="PRO_0000161478" description="tRNA uridine(34) hydroxylase">
    <location>
        <begin position="1"/>
        <end position="313"/>
    </location>
</feature>
<feature type="domain" description="Rhodanese" evidence="1">
    <location>
        <begin position="127"/>
        <end position="225"/>
    </location>
</feature>
<feature type="active site" description="Cysteine persulfide intermediate" evidence="1">
    <location>
        <position position="185"/>
    </location>
</feature>
<proteinExistence type="inferred from homology"/>
<sequence length="313" mass="35597">MSDTFEPIRIVALYHFTPFEDPAALRGPLLELCEKEGIKGILLLAREGINGTIAGTDEGMERVMAHIRALPGCADLESKDSRAPELPFRRMKVRLKKEIVTMGEPDIDPRQGVGRYVAPEDWNALISDPDTILIDTRNDYEVAIGTFKGAEDPKTKSFREFPEWFRRRRQELEAKGRLPKIAMFCTGGIRCEKSTSFARAEGVDEVYHLKGGILKYLETVPEEESLWEGECFVFDQRVSVKHGLEIGTHDVCHACRRPLNEKDKASPLFVQGVSCPHCHNERTEEQRHRYAERERQEALAQARRAGHLGVRQK</sequence>
<keyword id="KW-0560">Oxidoreductase</keyword>
<keyword id="KW-1185">Reference proteome</keyword>
<keyword id="KW-0819">tRNA processing</keyword>